<feature type="chain" id="PRO_0000416018" description="Thrombin-like enzyme D-V">
    <location>
        <begin position="1"/>
        <end position="10" status="greater than"/>
    </location>
</feature>
<feature type="domain" description="Peptidase S1" evidence="2">
    <location>
        <begin position="1"/>
        <end position="10" status="greater than"/>
    </location>
</feature>
<feature type="disulfide bond" evidence="2">
    <location>
        <begin position="7"/>
        <end status="unknown"/>
    </location>
</feature>
<feature type="non-terminal residue">
    <location>
        <position position="10"/>
    </location>
</feature>
<proteinExistence type="evidence at protein level"/>
<comment type="function">
    <text evidence="3">Thrombin-like enzyme that induces quick formation of fibrin clots. Only degrades the Aalpha-chain of fibrinogen (FGA).</text>
</comment>
<comment type="activity regulation">
    <text evidence="3">Is not inhibited by aprotinin.</text>
</comment>
<comment type="subunit">
    <text evidence="1">Monomer.</text>
</comment>
<comment type="subcellular location">
    <subcellularLocation>
        <location>Secreted</location>
    </subcellularLocation>
</comment>
<comment type="tissue specificity">
    <text>Expressed by the venom gland.</text>
</comment>
<comment type="PTM">
    <text>Glycosylated.</text>
</comment>
<comment type="similarity">
    <text evidence="2">Belongs to the peptidase S1 family. Snake venom subfamily.</text>
</comment>
<organism>
    <name type="scientific">Bothrops jararacussu</name>
    <name type="common">Jararacussu</name>
    <dbReference type="NCBI Taxonomy" id="8726"/>
    <lineage>
        <taxon>Eukaryota</taxon>
        <taxon>Metazoa</taxon>
        <taxon>Chordata</taxon>
        <taxon>Craniata</taxon>
        <taxon>Vertebrata</taxon>
        <taxon>Euteleostomi</taxon>
        <taxon>Lepidosauria</taxon>
        <taxon>Squamata</taxon>
        <taxon>Bifurcata</taxon>
        <taxon>Unidentata</taxon>
        <taxon>Episquamata</taxon>
        <taxon>Toxicofera</taxon>
        <taxon>Serpentes</taxon>
        <taxon>Colubroidea</taxon>
        <taxon>Viperidae</taxon>
        <taxon>Crotalinae</taxon>
        <taxon>Bothrops</taxon>
    </lineage>
</organism>
<keyword id="KW-1204">Blood coagulation cascade activating toxin</keyword>
<keyword id="KW-0903">Direct protein sequencing</keyword>
<keyword id="KW-1015">Disulfide bond</keyword>
<keyword id="KW-0325">Glycoprotein</keyword>
<keyword id="KW-1199">Hemostasis impairing toxin</keyword>
<keyword id="KW-0378">Hydrolase</keyword>
<keyword id="KW-0645">Protease</keyword>
<keyword id="KW-0964">Secreted</keyword>
<keyword id="KW-0720">Serine protease</keyword>
<keyword id="KW-0800">Toxin</keyword>
<sequence length="10" mass="1052">VVGADNCNFN</sequence>
<name>VSPDV_BOTJR</name>
<reference key="1">
    <citation type="journal article" date="1997" name="Toxicon">
        <title>Isolation and characterization of a new clotting factor from Bothrops jararacussu (jararacucu) venom.</title>
        <authorList>
            <person name="Andriao-Escarso S.H."/>
            <person name="Sampaio S.V."/>
            <person name="Cunha O.A."/>
            <person name="Marangoni S."/>
            <person name="Oliveira B."/>
            <person name="Giglio J.R."/>
        </authorList>
    </citation>
    <scope>PROTEIN SEQUENCE</scope>
    <scope>FUNCTION</scope>
    <scope>ACTIVITY REGULATION</scope>
    <source>
        <tissue>Venom</tissue>
    </source>
</reference>
<evidence type="ECO:0000250" key="1"/>
<evidence type="ECO:0000255" key="2">
    <source>
        <dbReference type="PROSITE-ProRule" id="PRU00274"/>
    </source>
</evidence>
<evidence type="ECO:0000269" key="3">
    <source>
    </source>
</evidence>
<dbReference type="EC" id="3.4.21.-"/>
<dbReference type="GO" id="GO:0005576">
    <property type="term" value="C:extracellular region"/>
    <property type="evidence" value="ECO:0007669"/>
    <property type="project" value="UniProtKB-SubCell"/>
</dbReference>
<dbReference type="GO" id="GO:0008236">
    <property type="term" value="F:serine-type peptidase activity"/>
    <property type="evidence" value="ECO:0007669"/>
    <property type="project" value="UniProtKB-KW"/>
</dbReference>
<dbReference type="GO" id="GO:0090729">
    <property type="term" value="F:toxin activity"/>
    <property type="evidence" value="ECO:0007669"/>
    <property type="project" value="UniProtKB-KW"/>
</dbReference>
<dbReference type="GO" id="GO:0006508">
    <property type="term" value="P:proteolysis"/>
    <property type="evidence" value="ECO:0007669"/>
    <property type="project" value="UniProtKB-KW"/>
</dbReference>
<accession>P0DJE8</accession>
<protein>
    <recommendedName>
        <fullName>Thrombin-like enzyme D-V</fullName>
        <shortName>SVTLE D-V</shortName>
        <ecNumber>3.4.21.-</ecNumber>
    </recommendedName>
    <alternativeName>
        <fullName>Clotting factor</fullName>
    </alternativeName>
    <alternativeName>
        <fullName>Fibrinogen-clotting enzyme</fullName>
    </alternativeName>
    <alternativeName>
        <fullName>Snake venom serine protease</fullName>
        <shortName>SVSP</shortName>
    </alternativeName>
</protein>